<accession>Q5NGI4</accession>
<protein>
    <recommendedName>
        <fullName evidence="1">4-hydroxybenzoate octaprenyltransferase</fullName>
        <ecNumber evidence="1">2.5.1.39</ecNumber>
    </recommendedName>
    <alternativeName>
        <fullName evidence="1">4-HB polyprenyltransferase</fullName>
    </alternativeName>
</protein>
<dbReference type="EC" id="2.5.1.39" evidence="1"/>
<dbReference type="EMBL" id="AJ749949">
    <property type="protein sequence ID" value="CAG45489.1"/>
    <property type="molecule type" value="Genomic_DNA"/>
</dbReference>
<dbReference type="RefSeq" id="WP_003020835.1">
    <property type="nucleotide sequence ID" value="NC_006570.2"/>
</dbReference>
<dbReference type="RefSeq" id="YP_169858.1">
    <property type="nucleotide sequence ID" value="NC_006570.2"/>
</dbReference>
<dbReference type="SMR" id="Q5NGI4"/>
<dbReference type="STRING" id="177416.FTT_0856c"/>
<dbReference type="DNASU" id="3192470"/>
<dbReference type="EnsemblBacteria" id="CAG45489">
    <property type="protein sequence ID" value="CAG45489"/>
    <property type="gene ID" value="FTT_0856c"/>
</dbReference>
<dbReference type="KEGG" id="ftu:FTT_0856c"/>
<dbReference type="eggNOG" id="COG0382">
    <property type="taxonomic scope" value="Bacteria"/>
</dbReference>
<dbReference type="OrthoDB" id="9782418at2"/>
<dbReference type="UniPathway" id="UPA00232"/>
<dbReference type="Proteomes" id="UP000001174">
    <property type="component" value="Chromosome"/>
</dbReference>
<dbReference type="GO" id="GO:0005886">
    <property type="term" value="C:plasma membrane"/>
    <property type="evidence" value="ECO:0007669"/>
    <property type="project" value="UniProtKB-SubCell"/>
</dbReference>
<dbReference type="GO" id="GO:0008412">
    <property type="term" value="F:4-hydroxybenzoate polyprenyltransferase activity"/>
    <property type="evidence" value="ECO:0007669"/>
    <property type="project" value="UniProtKB-UniRule"/>
</dbReference>
<dbReference type="GO" id="GO:0006744">
    <property type="term" value="P:ubiquinone biosynthetic process"/>
    <property type="evidence" value="ECO:0007669"/>
    <property type="project" value="UniProtKB-UniRule"/>
</dbReference>
<dbReference type="CDD" id="cd13959">
    <property type="entry name" value="PT_UbiA_COQ2"/>
    <property type="match status" value="1"/>
</dbReference>
<dbReference type="FunFam" id="1.10.357.140:FF:000008">
    <property type="entry name" value="4-hydroxybenzoate octaprenyltransferase"/>
    <property type="match status" value="1"/>
</dbReference>
<dbReference type="FunFam" id="1.20.120.1780:FF:000001">
    <property type="entry name" value="4-hydroxybenzoate octaprenyltransferase"/>
    <property type="match status" value="1"/>
</dbReference>
<dbReference type="Gene3D" id="1.10.357.140">
    <property type="entry name" value="UbiA prenyltransferase"/>
    <property type="match status" value="1"/>
</dbReference>
<dbReference type="Gene3D" id="1.20.120.1780">
    <property type="entry name" value="UbiA prenyltransferase"/>
    <property type="match status" value="1"/>
</dbReference>
<dbReference type="HAMAP" id="MF_01635">
    <property type="entry name" value="UbiA"/>
    <property type="match status" value="1"/>
</dbReference>
<dbReference type="InterPro" id="IPR006370">
    <property type="entry name" value="HB_polyprenyltransferase-like"/>
</dbReference>
<dbReference type="InterPro" id="IPR039653">
    <property type="entry name" value="Prenyltransferase"/>
</dbReference>
<dbReference type="InterPro" id="IPR000537">
    <property type="entry name" value="UbiA_prenyltransferase"/>
</dbReference>
<dbReference type="InterPro" id="IPR030470">
    <property type="entry name" value="UbiA_prenylTrfase_CS"/>
</dbReference>
<dbReference type="InterPro" id="IPR044878">
    <property type="entry name" value="UbiA_sf"/>
</dbReference>
<dbReference type="NCBIfam" id="TIGR01474">
    <property type="entry name" value="ubiA_proteo"/>
    <property type="match status" value="1"/>
</dbReference>
<dbReference type="PANTHER" id="PTHR11048:SF28">
    <property type="entry name" value="4-HYDROXYBENZOATE POLYPRENYLTRANSFERASE, MITOCHONDRIAL"/>
    <property type="match status" value="1"/>
</dbReference>
<dbReference type="PANTHER" id="PTHR11048">
    <property type="entry name" value="PRENYLTRANSFERASES"/>
    <property type="match status" value="1"/>
</dbReference>
<dbReference type="Pfam" id="PF01040">
    <property type="entry name" value="UbiA"/>
    <property type="match status" value="1"/>
</dbReference>
<dbReference type="PROSITE" id="PS00943">
    <property type="entry name" value="UBIA"/>
    <property type="match status" value="1"/>
</dbReference>
<gene>
    <name evidence="1" type="primary">ubiA</name>
    <name type="ordered locus">FTT_0856c</name>
</gene>
<evidence type="ECO:0000255" key="1">
    <source>
        <dbReference type="HAMAP-Rule" id="MF_01635"/>
    </source>
</evidence>
<feature type="chain" id="PRO_0000262797" description="4-hydroxybenzoate octaprenyltransferase">
    <location>
        <begin position="1"/>
        <end position="284"/>
    </location>
</feature>
<feature type="transmembrane region" description="Helical" evidence="1">
    <location>
        <begin position="19"/>
        <end position="39"/>
    </location>
</feature>
<feature type="transmembrane region" description="Helical" evidence="1">
    <location>
        <begin position="42"/>
        <end position="62"/>
    </location>
</feature>
<feature type="transmembrane region" description="Helical" evidence="1">
    <location>
        <begin position="85"/>
        <end position="105"/>
    </location>
</feature>
<feature type="transmembrane region" description="Helical" evidence="1">
    <location>
        <begin position="107"/>
        <end position="127"/>
    </location>
</feature>
<feature type="transmembrane region" description="Helical" evidence="1">
    <location>
        <begin position="134"/>
        <end position="154"/>
    </location>
</feature>
<feature type="transmembrane region" description="Helical" evidence="1">
    <location>
        <begin position="165"/>
        <end position="185"/>
    </location>
</feature>
<feature type="transmembrane region" description="Helical" evidence="1">
    <location>
        <begin position="211"/>
        <end position="231"/>
    </location>
</feature>
<feature type="transmembrane region" description="Helical" evidence="1">
    <location>
        <begin position="233"/>
        <end position="253"/>
    </location>
</feature>
<feature type="transmembrane region" description="Helical" evidence="1">
    <location>
        <begin position="261"/>
        <end position="281"/>
    </location>
</feature>
<sequence>MNKQQLKAYFMLMRLHRPIPILLILWPTLTALVLASHGLPDISYLVIFTIGVVVMRTVGCIINDIADVDFDKHVARTNTRPLTSGQLSIKNAIWLCISLTLVAFICVLFLNLYTILLSFVALFLAILYPFCKRFFAIPQLILGLAFNFGIFMAFSTIQNQIPVEAWIFYIATICWTIAYDTIYALADREFDLEIGIKSSAVLFGNKVFRYILLFNFLSLLLLIILGIYCDFNSFFYLGVVICSLFFVRNYFLYKKLGITNCINAFSANHWIGLIIFIIAVIQYI</sequence>
<proteinExistence type="inferred from homology"/>
<organism>
    <name type="scientific">Francisella tularensis subsp. tularensis (strain SCHU S4 / Schu 4)</name>
    <dbReference type="NCBI Taxonomy" id="177416"/>
    <lineage>
        <taxon>Bacteria</taxon>
        <taxon>Pseudomonadati</taxon>
        <taxon>Pseudomonadota</taxon>
        <taxon>Gammaproteobacteria</taxon>
        <taxon>Thiotrichales</taxon>
        <taxon>Francisellaceae</taxon>
        <taxon>Francisella</taxon>
    </lineage>
</organism>
<name>UBIA_FRATT</name>
<reference key="1">
    <citation type="journal article" date="2005" name="Nat. Genet.">
        <title>The complete genome sequence of Francisella tularensis, the causative agent of tularemia.</title>
        <authorList>
            <person name="Larsson P."/>
            <person name="Oyston P.C.F."/>
            <person name="Chain P."/>
            <person name="Chu M.C."/>
            <person name="Duffield M."/>
            <person name="Fuxelius H.-H."/>
            <person name="Garcia E."/>
            <person name="Haelltorp G."/>
            <person name="Johansson D."/>
            <person name="Isherwood K.E."/>
            <person name="Karp P.D."/>
            <person name="Larsson E."/>
            <person name="Liu Y."/>
            <person name="Michell S."/>
            <person name="Prior J."/>
            <person name="Prior R."/>
            <person name="Malfatti S."/>
            <person name="Sjoestedt A."/>
            <person name="Svensson K."/>
            <person name="Thompson N."/>
            <person name="Vergez L."/>
            <person name="Wagg J.K."/>
            <person name="Wren B.W."/>
            <person name="Lindler L.E."/>
            <person name="Andersson S.G.E."/>
            <person name="Forsman M."/>
            <person name="Titball R.W."/>
        </authorList>
    </citation>
    <scope>NUCLEOTIDE SEQUENCE [LARGE SCALE GENOMIC DNA]</scope>
    <source>
        <strain>SCHU S4 / Schu 4</strain>
    </source>
</reference>
<comment type="function">
    <text evidence="1">Catalyzes the prenylation of para-hydroxybenzoate (PHB) with an all-trans polyprenyl group. Mediates the second step in the final reaction sequence of ubiquinone-8 (UQ-8) biosynthesis, which is the condensation of the polyisoprenoid side chain with PHB, generating the first membrane-bound Q intermediate 3-octaprenyl-4-hydroxybenzoate.</text>
</comment>
<comment type="catalytic activity">
    <reaction evidence="1">
        <text>all-trans-octaprenyl diphosphate + 4-hydroxybenzoate = 4-hydroxy-3-(all-trans-octaprenyl)benzoate + diphosphate</text>
        <dbReference type="Rhea" id="RHEA:27782"/>
        <dbReference type="ChEBI" id="CHEBI:1617"/>
        <dbReference type="ChEBI" id="CHEBI:17879"/>
        <dbReference type="ChEBI" id="CHEBI:33019"/>
        <dbReference type="ChEBI" id="CHEBI:57711"/>
        <dbReference type="EC" id="2.5.1.39"/>
    </reaction>
</comment>
<comment type="cofactor">
    <cofactor evidence="1">
        <name>Mg(2+)</name>
        <dbReference type="ChEBI" id="CHEBI:18420"/>
    </cofactor>
</comment>
<comment type="pathway">
    <text evidence="1">Cofactor biosynthesis; ubiquinone biosynthesis.</text>
</comment>
<comment type="subcellular location">
    <subcellularLocation>
        <location evidence="1">Cell inner membrane</location>
        <topology evidence="1">Multi-pass membrane protein</topology>
    </subcellularLocation>
</comment>
<comment type="similarity">
    <text evidence="1">Belongs to the UbiA prenyltransferase family.</text>
</comment>
<keyword id="KW-0997">Cell inner membrane</keyword>
<keyword id="KW-1003">Cell membrane</keyword>
<keyword id="KW-0460">Magnesium</keyword>
<keyword id="KW-0472">Membrane</keyword>
<keyword id="KW-1185">Reference proteome</keyword>
<keyword id="KW-0808">Transferase</keyword>
<keyword id="KW-0812">Transmembrane</keyword>
<keyword id="KW-1133">Transmembrane helix</keyword>
<keyword id="KW-0831">Ubiquinone biosynthesis</keyword>